<organism>
    <name type="scientific">Bacillus subtilis (strain 168)</name>
    <dbReference type="NCBI Taxonomy" id="224308"/>
    <lineage>
        <taxon>Bacteria</taxon>
        <taxon>Bacillati</taxon>
        <taxon>Bacillota</taxon>
        <taxon>Bacilli</taxon>
        <taxon>Bacillales</taxon>
        <taxon>Bacillaceae</taxon>
        <taxon>Bacillus</taxon>
    </lineage>
</organism>
<keyword id="KW-0058">Aromatic hydrocarbons catabolism</keyword>
<keyword id="KW-0216">Detoxification</keyword>
<keyword id="KW-0285">Flavoprotein</keyword>
<keyword id="KW-0288">FMN</keyword>
<keyword id="KW-0637">Prenyltransferase</keyword>
<keyword id="KW-1185">Reference proteome</keyword>
<keyword id="KW-0808">Transferase</keyword>
<comment type="function">
    <text evidence="1 3">Involved in the non-oxidative decarboxylation and detoxification of phenolic derivatives under both aerobic and anaerobic conditions (PubMed:18388975). Flavin prenyltransferase that catalyzes the synthesis of the prenylated FMN cofactor (prenyl-FMN) for phenolic acid decarboxylase (By similarity).</text>
</comment>
<comment type="catalytic activity">
    <reaction evidence="1">
        <text>dimethylallyl phosphate + FMNH2 = prenylated FMNH2 + phosphate</text>
        <dbReference type="Rhea" id="RHEA:37743"/>
        <dbReference type="ChEBI" id="CHEBI:43474"/>
        <dbReference type="ChEBI" id="CHEBI:57618"/>
        <dbReference type="ChEBI" id="CHEBI:87467"/>
        <dbReference type="ChEBI" id="CHEBI:88052"/>
        <dbReference type="EC" id="2.5.1.129"/>
    </reaction>
</comment>
<comment type="subunit">
    <text evidence="1">Homododecamer.</text>
</comment>
<comment type="induction">
    <text evidence="2">Up-regulated by salicylate via the transcriptional regulator BsdA.</text>
</comment>
<comment type="disruption phenotype">
    <text evidence="4">A triple bsdB-bsdC-bsdD deletion mutant no longer converts vanillin to guaiacol, the conversion stops at vanillic acid (PubMed:26658822).</text>
</comment>
<comment type="miscellaneous">
    <text evidence="8">It is not known, if phenolic acid decarboxylase forms a complex composed of BsdB, BsdC and BsdD. The term subunit is often used in reference to the operon, however there is no experimental evidence to prove the existence of the complex.</text>
</comment>
<comment type="similarity">
    <text evidence="1">Belongs to the UbiX/PAD1 family. YclB subfamily.</text>
</comment>
<gene>
    <name evidence="5" type="primary">bsdB</name>
    <name evidence="6" type="synonym">ubiX</name>
    <name evidence="7" type="synonym">yclB</name>
    <name type="ordered locus">BSU03630</name>
</gene>
<feature type="chain" id="PRO_0000134957" description="Probable UbiX-like flavin prenyltransferase">
    <location>
        <begin position="1"/>
        <end position="204"/>
    </location>
</feature>
<feature type="binding site" evidence="1">
    <location>
        <begin position="21"/>
        <end position="23"/>
    </location>
    <ligand>
        <name>FMN</name>
        <dbReference type="ChEBI" id="CHEBI:58210"/>
    </ligand>
</feature>
<feature type="binding site" evidence="1">
    <location>
        <position position="47"/>
    </location>
    <ligand>
        <name>FMN</name>
        <dbReference type="ChEBI" id="CHEBI:58210"/>
    </ligand>
</feature>
<feature type="binding site" evidence="1">
    <location>
        <begin position="98"/>
        <end position="101"/>
    </location>
    <ligand>
        <name>FMN</name>
        <dbReference type="ChEBI" id="CHEBI:58210"/>
    </ligand>
</feature>
<feature type="binding site" evidence="1">
    <location>
        <position position="133"/>
    </location>
    <ligand>
        <name>FMN</name>
        <dbReference type="ChEBI" id="CHEBI:58210"/>
    </ligand>
</feature>
<accession>P94404</accession>
<sequence length="204" mass="22539">MKAEFKRKGGGKVKLVVGMTGATGAIFGVRLLQWLKAAGVETHLVVSPWANVTIKHETGYTLQEVEQLATYTYSHKDQAAAISSGSFDTDGMIVAPCSMKSLASIRTGMADNLLTRAADVMLKERKKLVLLTRETPLNQIHLENMLALTKMGTIILPPMPAFYNRPRSLEEMVDHIVFRTLDQFGIRLPEAKRWNGIEKQKGGA</sequence>
<reference key="1">
    <citation type="journal article" date="1996" name="Microbiology">
        <title>The 25 degrees-36 degrees region of the Bacillus subtilis chromosome: determination of the sequence of a 146 kb segment and identification of 113 genes.</title>
        <authorList>
            <person name="Yamane K."/>
            <person name="Kumano M."/>
            <person name="Kurita K."/>
        </authorList>
    </citation>
    <scope>NUCLEOTIDE SEQUENCE [GENOMIC DNA]</scope>
    <source>
        <strain>168</strain>
    </source>
</reference>
<reference key="2">
    <citation type="journal article" date="1997" name="Nature">
        <title>The complete genome sequence of the Gram-positive bacterium Bacillus subtilis.</title>
        <authorList>
            <person name="Kunst F."/>
            <person name="Ogasawara N."/>
            <person name="Moszer I."/>
            <person name="Albertini A.M."/>
            <person name="Alloni G."/>
            <person name="Azevedo V."/>
            <person name="Bertero M.G."/>
            <person name="Bessieres P."/>
            <person name="Bolotin A."/>
            <person name="Borchert S."/>
            <person name="Borriss R."/>
            <person name="Boursier L."/>
            <person name="Brans A."/>
            <person name="Braun M."/>
            <person name="Brignell S.C."/>
            <person name="Bron S."/>
            <person name="Brouillet S."/>
            <person name="Bruschi C.V."/>
            <person name="Caldwell B."/>
            <person name="Capuano V."/>
            <person name="Carter N.M."/>
            <person name="Choi S.-K."/>
            <person name="Codani J.-J."/>
            <person name="Connerton I.F."/>
            <person name="Cummings N.J."/>
            <person name="Daniel R.A."/>
            <person name="Denizot F."/>
            <person name="Devine K.M."/>
            <person name="Duesterhoeft A."/>
            <person name="Ehrlich S.D."/>
            <person name="Emmerson P.T."/>
            <person name="Entian K.-D."/>
            <person name="Errington J."/>
            <person name="Fabret C."/>
            <person name="Ferrari E."/>
            <person name="Foulger D."/>
            <person name="Fritz C."/>
            <person name="Fujita M."/>
            <person name="Fujita Y."/>
            <person name="Fuma S."/>
            <person name="Galizzi A."/>
            <person name="Galleron N."/>
            <person name="Ghim S.-Y."/>
            <person name="Glaser P."/>
            <person name="Goffeau A."/>
            <person name="Golightly E.J."/>
            <person name="Grandi G."/>
            <person name="Guiseppi G."/>
            <person name="Guy B.J."/>
            <person name="Haga K."/>
            <person name="Haiech J."/>
            <person name="Harwood C.R."/>
            <person name="Henaut A."/>
            <person name="Hilbert H."/>
            <person name="Holsappel S."/>
            <person name="Hosono S."/>
            <person name="Hullo M.-F."/>
            <person name="Itaya M."/>
            <person name="Jones L.-M."/>
            <person name="Joris B."/>
            <person name="Karamata D."/>
            <person name="Kasahara Y."/>
            <person name="Klaerr-Blanchard M."/>
            <person name="Klein C."/>
            <person name="Kobayashi Y."/>
            <person name="Koetter P."/>
            <person name="Koningstein G."/>
            <person name="Krogh S."/>
            <person name="Kumano M."/>
            <person name="Kurita K."/>
            <person name="Lapidus A."/>
            <person name="Lardinois S."/>
            <person name="Lauber J."/>
            <person name="Lazarevic V."/>
            <person name="Lee S.-M."/>
            <person name="Levine A."/>
            <person name="Liu H."/>
            <person name="Masuda S."/>
            <person name="Mauel C."/>
            <person name="Medigue C."/>
            <person name="Medina N."/>
            <person name="Mellado R.P."/>
            <person name="Mizuno M."/>
            <person name="Moestl D."/>
            <person name="Nakai S."/>
            <person name="Noback M."/>
            <person name="Noone D."/>
            <person name="O'Reilly M."/>
            <person name="Ogawa K."/>
            <person name="Ogiwara A."/>
            <person name="Oudega B."/>
            <person name="Park S.-H."/>
            <person name="Parro V."/>
            <person name="Pohl T.M."/>
            <person name="Portetelle D."/>
            <person name="Porwollik S."/>
            <person name="Prescott A.M."/>
            <person name="Presecan E."/>
            <person name="Pujic P."/>
            <person name="Purnelle B."/>
            <person name="Rapoport G."/>
            <person name="Rey M."/>
            <person name="Reynolds S."/>
            <person name="Rieger M."/>
            <person name="Rivolta C."/>
            <person name="Rocha E."/>
            <person name="Roche B."/>
            <person name="Rose M."/>
            <person name="Sadaie Y."/>
            <person name="Sato T."/>
            <person name="Scanlan E."/>
            <person name="Schleich S."/>
            <person name="Schroeter R."/>
            <person name="Scoffone F."/>
            <person name="Sekiguchi J."/>
            <person name="Sekowska A."/>
            <person name="Seror S.J."/>
            <person name="Serror P."/>
            <person name="Shin B.-S."/>
            <person name="Soldo B."/>
            <person name="Sorokin A."/>
            <person name="Tacconi E."/>
            <person name="Takagi T."/>
            <person name="Takahashi H."/>
            <person name="Takemaru K."/>
            <person name="Takeuchi M."/>
            <person name="Tamakoshi A."/>
            <person name="Tanaka T."/>
            <person name="Terpstra P."/>
            <person name="Tognoni A."/>
            <person name="Tosato V."/>
            <person name="Uchiyama S."/>
            <person name="Vandenbol M."/>
            <person name="Vannier F."/>
            <person name="Vassarotti A."/>
            <person name="Viari A."/>
            <person name="Wambutt R."/>
            <person name="Wedler E."/>
            <person name="Wedler H."/>
            <person name="Weitzenegger T."/>
            <person name="Winters P."/>
            <person name="Wipat A."/>
            <person name="Yamamoto H."/>
            <person name="Yamane K."/>
            <person name="Yasumoto K."/>
            <person name="Yata K."/>
            <person name="Yoshida K."/>
            <person name="Yoshikawa H.-F."/>
            <person name="Zumstein E."/>
            <person name="Yoshikawa H."/>
            <person name="Danchin A."/>
        </authorList>
    </citation>
    <scope>NUCLEOTIDE SEQUENCE [LARGE SCALE GENOMIC DNA]</scope>
    <source>
        <strain>168</strain>
    </source>
</reference>
<reference key="3">
    <citation type="journal article" date="2007" name="Proteomics">
        <title>The proteome and transcriptome analysis of Bacillus subtilis in response to salicylic acid.</title>
        <authorList>
            <person name="Duy N.V."/>
            <person name="Maeder U."/>
            <person name="Tran N.P."/>
            <person name="Cavin J.-F."/>
            <person name="Tam le T."/>
            <person name="Albrecht D."/>
            <person name="Hecker M."/>
            <person name="Antelmann H."/>
        </authorList>
    </citation>
    <scope>INDUCTION</scope>
    <source>
        <strain>168</strain>
    </source>
</reference>
<reference key="4">
    <citation type="journal article" date="2008" name="Can. J. Microbiol.">
        <title>Properties of the reversible nonoxidative vanillate/4-hydroxybenzoate decarboxylase from Bacillus subtilis.</title>
        <authorList>
            <person name="Lupa B."/>
            <person name="Lyon D."/>
            <person name="Shaw L.N."/>
            <person name="Sieprawska-Lupa M."/>
            <person name="Wiegel J."/>
        </authorList>
    </citation>
    <scope>FUNCTION IN DETOXIFICATION OF PHENOLIC DERIVATIVES</scope>
    <scope>NOMENCLATURE</scope>
    <source>
        <strain>168 / Marburg / ATCC 6051 / DSM 10 / JCM 1465 / NBRC 13719 / NCIMB 3610 / NRRL NRS-744 / VKM B-501</strain>
    </source>
</reference>
<reference key="5">
    <citation type="journal article" date="2016" name="Appl. Microbiol. Biotechnol.">
        <title>Identification and characterization of the vanillin dehydrogenase YfmT in Bacillus subtilis 3NA.</title>
        <authorList>
            <person name="Graf N."/>
            <person name="Wenzel M."/>
            <person name="Altenbuchner J."/>
        </authorList>
    </citation>
    <scope>DISRUPTION PHENOTYPE</scope>
    <source>
        <strain>168 / 3NA</strain>
    </source>
</reference>
<dbReference type="EC" id="2.5.1.129" evidence="1"/>
<dbReference type="EMBL" id="D50453">
    <property type="protein sequence ID" value="BAA08996.1"/>
    <property type="molecule type" value="Genomic_DNA"/>
</dbReference>
<dbReference type="EMBL" id="AL009126">
    <property type="protein sequence ID" value="CAB12157.1"/>
    <property type="molecule type" value="Genomic_DNA"/>
</dbReference>
<dbReference type="PIR" id="G69761">
    <property type="entry name" value="G69761"/>
</dbReference>
<dbReference type="RefSeq" id="NP_388245.1">
    <property type="nucleotide sequence ID" value="NC_000964.3"/>
</dbReference>
<dbReference type="RefSeq" id="WP_009966530.1">
    <property type="nucleotide sequence ID" value="NZ_OZ025638.1"/>
</dbReference>
<dbReference type="SMR" id="P94404"/>
<dbReference type="FunCoup" id="P94404">
    <property type="interactions" value="376"/>
</dbReference>
<dbReference type="IntAct" id="P94404">
    <property type="interactions" value="1"/>
</dbReference>
<dbReference type="STRING" id="224308.BSU03630"/>
<dbReference type="PaxDb" id="224308-BSU03630"/>
<dbReference type="EnsemblBacteria" id="CAB12157">
    <property type="protein sequence ID" value="CAB12157"/>
    <property type="gene ID" value="BSU_03630"/>
</dbReference>
<dbReference type="GeneID" id="938296"/>
<dbReference type="KEGG" id="bsu:BSU03630"/>
<dbReference type="PATRIC" id="fig|224308.43.peg.375"/>
<dbReference type="eggNOG" id="COG0163">
    <property type="taxonomic scope" value="Bacteria"/>
</dbReference>
<dbReference type="InParanoid" id="P94404"/>
<dbReference type="OrthoDB" id="9781577at2"/>
<dbReference type="PhylomeDB" id="P94404"/>
<dbReference type="BioCyc" id="BSUB:BSU03630-MONOMER"/>
<dbReference type="Proteomes" id="UP000001570">
    <property type="component" value="Chromosome"/>
</dbReference>
<dbReference type="GO" id="GO:0016831">
    <property type="term" value="F:carboxy-lyase activity"/>
    <property type="evidence" value="ECO:0000318"/>
    <property type="project" value="GO_Central"/>
</dbReference>
<dbReference type="GO" id="GO:0106141">
    <property type="term" value="F:flavin prenyltransferase activity"/>
    <property type="evidence" value="ECO:0007669"/>
    <property type="project" value="UniProtKB-EC"/>
</dbReference>
<dbReference type="GO" id="GO:0009056">
    <property type="term" value="P:catabolic process"/>
    <property type="evidence" value="ECO:0007669"/>
    <property type="project" value="UniProtKB-KW"/>
</dbReference>
<dbReference type="GO" id="GO:0009636">
    <property type="term" value="P:response to toxic substance"/>
    <property type="evidence" value="ECO:0007669"/>
    <property type="project" value="UniProtKB-KW"/>
</dbReference>
<dbReference type="FunFam" id="3.40.50.1950:FF:000001">
    <property type="entry name" value="Flavin prenyltransferase UbiX"/>
    <property type="match status" value="1"/>
</dbReference>
<dbReference type="Gene3D" id="3.40.50.1950">
    <property type="entry name" value="Flavin prenyltransferase-like"/>
    <property type="match status" value="1"/>
</dbReference>
<dbReference type="HAMAP" id="MF_01984">
    <property type="entry name" value="ubiX_pad"/>
    <property type="match status" value="1"/>
</dbReference>
<dbReference type="HAMAP" id="MF_01986">
    <property type="entry name" value="ubiX_pad_yclB"/>
    <property type="match status" value="1"/>
</dbReference>
<dbReference type="InterPro" id="IPR036551">
    <property type="entry name" value="Flavin_trans-like"/>
</dbReference>
<dbReference type="InterPro" id="IPR003382">
    <property type="entry name" value="Flavoprotein"/>
</dbReference>
<dbReference type="InterPro" id="IPR004507">
    <property type="entry name" value="UbiX-like"/>
</dbReference>
<dbReference type="InterPro" id="IPR032901">
    <property type="entry name" value="UbiX_pad_YclB"/>
</dbReference>
<dbReference type="NCBIfam" id="NF004685">
    <property type="entry name" value="PRK06029.1"/>
    <property type="match status" value="1"/>
</dbReference>
<dbReference type="NCBIfam" id="TIGR00421">
    <property type="entry name" value="ubiX_pad"/>
    <property type="match status" value="1"/>
</dbReference>
<dbReference type="NCBIfam" id="NF041206">
    <property type="entry name" value="VdcB"/>
    <property type="match status" value="1"/>
</dbReference>
<dbReference type="PANTHER" id="PTHR43374">
    <property type="entry name" value="FLAVIN PRENYLTRANSFERASE"/>
    <property type="match status" value="1"/>
</dbReference>
<dbReference type="PANTHER" id="PTHR43374:SF1">
    <property type="entry name" value="FLAVIN PRENYLTRANSFERASE PAD1, MITOCHONDRIAL"/>
    <property type="match status" value="1"/>
</dbReference>
<dbReference type="Pfam" id="PF02441">
    <property type="entry name" value="Flavoprotein"/>
    <property type="match status" value="1"/>
</dbReference>
<dbReference type="SUPFAM" id="SSF52507">
    <property type="entry name" value="Homo-oligomeric flavin-containing Cys decarboxylases, HFCD"/>
    <property type="match status" value="1"/>
</dbReference>
<protein>
    <recommendedName>
        <fullName evidence="1">Probable UbiX-like flavin prenyltransferase</fullName>
        <ecNumber evidence="1">2.5.1.129</ecNumber>
    </recommendedName>
    <alternativeName>
        <fullName evidence="1">Phenolic acid decarboxylase subunit B</fullName>
        <shortName evidence="1">PAD</shortName>
    </alternativeName>
</protein>
<proteinExistence type="evidence at protein level"/>
<name>PADL_BACSU</name>
<evidence type="ECO:0000255" key="1">
    <source>
        <dbReference type="HAMAP-Rule" id="MF_01986"/>
    </source>
</evidence>
<evidence type="ECO:0000269" key="2">
    <source>
    </source>
</evidence>
<evidence type="ECO:0000269" key="3">
    <source>
    </source>
</evidence>
<evidence type="ECO:0000269" key="4">
    <source>
    </source>
</evidence>
<evidence type="ECO:0000303" key="5">
    <source>
    </source>
</evidence>
<evidence type="ECO:0000303" key="6">
    <source>
    </source>
</evidence>
<evidence type="ECO:0000303" key="7">
    <source>
    </source>
</evidence>
<evidence type="ECO:0000305" key="8"/>